<feature type="chain" id="PRO_0000213180" description="Holin-like protein CidA">
    <location>
        <begin position="1"/>
        <end position="131"/>
    </location>
</feature>
<feature type="transmembrane region" description="Helical" evidence="1">
    <location>
        <begin position="7"/>
        <end position="25"/>
    </location>
</feature>
<feature type="transmembrane region" description="Helical" evidence="1">
    <location>
        <begin position="30"/>
        <end position="49"/>
    </location>
</feature>
<feature type="transmembrane region" description="Helical" evidence="1">
    <location>
        <begin position="62"/>
        <end position="82"/>
    </location>
</feature>
<feature type="transmembrane region" description="Helical" evidence="1">
    <location>
        <begin position="92"/>
        <end position="114"/>
    </location>
</feature>
<comment type="function">
    <text evidence="1">Increases the activity of extracellular murein hydrolases possibly by mediating their export via hole formation. Inhibited by the antiholin-like proteins LrgAB. In an unstressed cell, the LrgAB products probably inhibit the function of the CidAB proteins. When a cell is stressed by the addition of antibiotics or by other factors in the environment, the CidAB proteins possibly oligomerize within the bacterial cell membrane, creating lesions that disrupt the proton motive force, which in turn results in loss of cell viability. These lesions are also hypothesized to regulate the subsequent cell lysis by either allowing the murein hydrolases access to the cell wall substrate and/or regulating their activity by a possible change in the cell wall pH that results from loss of membrane potential.</text>
</comment>
<comment type="subcellular location">
    <subcellularLocation>
        <location evidence="1">Cell membrane</location>
        <topology evidence="1">Multi-pass membrane protein</topology>
    </subcellularLocation>
</comment>
<comment type="similarity">
    <text evidence="1">Belongs to the CidA/LrgA family. CidA subfamily.</text>
</comment>
<name>CIDA_STAAN</name>
<dbReference type="EMBL" id="BA000018">
    <property type="protein sequence ID" value="BAB43632.1"/>
    <property type="molecule type" value="Genomic_DNA"/>
</dbReference>
<dbReference type="PIR" id="F90058">
    <property type="entry name" value="F90058"/>
</dbReference>
<dbReference type="RefSeq" id="WP_000549734.1">
    <property type="nucleotide sequence ID" value="NC_002745.2"/>
</dbReference>
<dbReference type="SMR" id="P60646"/>
<dbReference type="TCDB" id="1.E.14.1.2">
    <property type="family name" value="the cida/lrga holin (cida/lrga holin) family"/>
</dbReference>
<dbReference type="EnsemblBacteria" id="BAB43632">
    <property type="protein sequence ID" value="BAB43632"/>
    <property type="gene ID" value="BAB43632"/>
</dbReference>
<dbReference type="KEGG" id="sau:SA2329"/>
<dbReference type="HOGENOM" id="CLU_113736_2_1_9"/>
<dbReference type="GO" id="GO:0005886">
    <property type="term" value="C:plasma membrane"/>
    <property type="evidence" value="ECO:0007669"/>
    <property type="project" value="UniProtKB-SubCell"/>
</dbReference>
<dbReference type="GO" id="GO:0019835">
    <property type="term" value="P:cytolysis"/>
    <property type="evidence" value="ECO:0007669"/>
    <property type="project" value="UniProtKB-UniRule"/>
</dbReference>
<dbReference type="GO" id="GO:0031640">
    <property type="term" value="P:killing of cells of another organism"/>
    <property type="evidence" value="ECO:0007669"/>
    <property type="project" value="UniProtKB-KW"/>
</dbReference>
<dbReference type="GO" id="GO:0012501">
    <property type="term" value="P:programmed cell death"/>
    <property type="evidence" value="ECO:0007669"/>
    <property type="project" value="UniProtKB-UniRule"/>
</dbReference>
<dbReference type="HAMAP" id="MF_01143">
    <property type="entry name" value="CidA"/>
    <property type="match status" value="1"/>
</dbReference>
<dbReference type="InterPro" id="IPR023760">
    <property type="entry name" value="Holin-like_CidA"/>
</dbReference>
<dbReference type="InterPro" id="IPR005538">
    <property type="entry name" value="LrgA/CidA"/>
</dbReference>
<dbReference type="PANTHER" id="PTHR33931:SF2">
    <property type="entry name" value="HOLIN-LIKE PROTEIN CIDA"/>
    <property type="match status" value="1"/>
</dbReference>
<dbReference type="PANTHER" id="PTHR33931">
    <property type="entry name" value="HOLIN-LIKE PROTEIN CIDA-RELATED"/>
    <property type="match status" value="1"/>
</dbReference>
<dbReference type="Pfam" id="PF03788">
    <property type="entry name" value="LrgA"/>
    <property type="match status" value="1"/>
</dbReference>
<accession>P60646</accession>
<accession>Q99R94</accession>
<keyword id="KW-1003">Cell membrane</keyword>
<keyword id="KW-0204">Cytolysis</keyword>
<keyword id="KW-0472">Membrane</keyword>
<keyword id="KW-0812">Transmembrane</keyword>
<keyword id="KW-1133">Transmembrane helix</keyword>
<gene>
    <name evidence="1" type="primary">cidA</name>
    <name type="ordered locus">SA2329</name>
</gene>
<protein>
    <recommendedName>
        <fullName evidence="1">Holin-like protein CidA</fullName>
    </recommendedName>
</protein>
<evidence type="ECO:0000255" key="1">
    <source>
        <dbReference type="HAMAP-Rule" id="MF_01143"/>
    </source>
</evidence>
<sequence length="131" mass="14730">MHKVQLIIKLLLQLGIIIVITYIGTEIQKIFHLPLAGSIVGLFLFYLLLQFKIVPLTWVEDGANFLLKTMVFFFIPSVVGIMDVASEITLNYILFFAVIIIGTCIVALSSGYIAEKMSVKHKHRKGVDAYE</sequence>
<proteinExistence type="inferred from homology"/>
<reference key="1">
    <citation type="journal article" date="2001" name="Lancet">
        <title>Whole genome sequencing of meticillin-resistant Staphylococcus aureus.</title>
        <authorList>
            <person name="Kuroda M."/>
            <person name="Ohta T."/>
            <person name="Uchiyama I."/>
            <person name="Baba T."/>
            <person name="Yuzawa H."/>
            <person name="Kobayashi I."/>
            <person name="Cui L."/>
            <person name="Oguchi A."/>
            <person name="Aoki K."/>
            <person name="Nagai Y."/>
            <person name="Lian J.-Q."/>
            <person name="Ito T."/>
            <person name="Kanamori M."/>
            <person name="Matsumaru H."/>
            <person name="Maruyama A."/>
            <person name="Murakami H."/>
            <person name="Hosoyama A."/>
            <person name="Mizutani-Ui Y."/>
            <person name="Takahashi N.K."/>
            <person name="Sawano T."/>
            <person name="Inoue R."/>
            <person name="Kaito C."/>
            <person name="Sekimizu K."/>
            <person name="Hirakawa H."/>
            <person name="Kuhara S."/>
            <person name="Goto S."/>
            <person name="Yabuzaki J."/>
            <person name="Kanehisa M."/>
            <person name="Yamashita A."/>
            <person name="Oshima K."/>
            <person name="Furuya K."/>
            <person name="Yoshino C."/>
            <person name="Shiba T."/>
            <person name="Hattori M."/>
            <person name="Ogasawara N."/>
            <person name="Hayashi H."/>
            <person name="Hiramatsu K."/>
        </authorList>
    </citation>
    <scope>NUCLEOTIDE SEQUENCE [LARGE SCALE GENOMIC DNA]</scope>
    <source>
        <strain>N315</strain>
    </source>
</reference>
<organism>
    <name type="scientific">Staphylococcus aureus (strain N315)</name>
    <dbReference type="NCBI Taxonomy" id="158879"/>
    <lineage>
        <taxon>Bacteria</taxon>
        <taxon>Bacillati</taxon>
        <taxon>Bacillota</taxon>
        <taxon>Bacilli</taxon>
        <taxon>Bacillales</taxon>
        <taxon>Staphylococcaceae</taxon>
        <taxon>Staphylococcus</taxon>
    </lineage>
</organism>